<accession>O51216</accession>
<comment type="function">
    <text evidence="1">In eubacteria ppGpp (guanosine 3'-diphosphate 5'-diphosphate) is a mediator of the stringent response that coordinates a variety of cellular activities in response to changes in nutritional abundance. This enzyme catalyzes the degradation of ppGpp into GDP. It may also be capable of catalyzing the synthesis of ppGpp (By similarity).</text>
</comment>
<comment type="catalytic activity">
    <reaction>
        <text>guanosine 3',5'-bis(diphosphate) + H2O = GDP + diphosphate + H(+)</text>
        <dbReference type="Rhea" id="RHEA:14253"/>
        <dbReference type="ChEBI" id="CHEBI:15377"/>
        <dbReference type="ChEBI" id="CHEBI:15378"/>
        <dbReference type="ChEBI" id="CHEBI:33019"/>
        <dbReference type="ChEBI" id="CHEBI:58189"/>
        <dbReference type="ChEBI" id="CHEBI:77828"/>
        <dbReference type="EC" id="3.1.7.2"/>
    </reaction>
</comment>
<comment type="cofactor">
    <cofactor evidence="1">
        <name>Mn(2+)</name>
        <dbReference type="ChEBI" id="CHEBI:29035"/>
    </cofactor>
</comment>
<comment type="pathway">
    <text>Purine metabolism; ppGpp biosynthesis; ppGpp from GDP: step 1/1.</text>
</comment>
<comment type="similarity">
    <text evidence="4">Belongs to the RelA/SpoT family.</text>
</comment>
<protein>
    <recommendedName>
        <fullName>Guanosine-3',5'-bis(diphosphate) 3'-pyrophosphohydrolase</fullName>
        <ecNumber>3.1.7.2</ecNumber>
    </recommendedName>
    <alternativeName>
        <fullName>Penta-phosphate guanosine-3'-pyrophosphohydrolase</fullName>
        <shortName>(ppGpp)ase</shortName>
    </alternativeName>
</protein>
<gene>
    <name type="primary">spoT</name>
    <name type="ordered locus">BB_0198</name>
</gene>
<proteinExistence type="inferred from homology"/>
<reference key="1">
    <citation type="journal article" date="1997" name="Nature">
        <title>Genomic sequence of a Lyme disease spirochaete, Borrelia burgdorferi.</title>
        <authorList>
            <person name="Fraser C.M."/>
            <person name="Casjens S."/>
            <person name="Huang W.M."/>
            <person name="Sutton G.G."/>
            <person name="Clayton R.A."/>
            <person name="Lathigra R."/>
            <person name="White O."/>
            <person name="Ketchum K.A."/>
            <person name="Dodson R.J."/>
            <person name="Hickey E.K."/>
            <person name="Gwinn M.L."/>
            <person name="Dougherty B.A."/>
            <person name="Tomb J.-F."/>
            <person name="Fleischmann R.D."/>
            <person name="Richardson D.L."/>
            <person name="Peterson J.D."/>
            <person name="Kerlavage A.R."/>
            <person name="Quackenbush J."/>
            <person name="Salzberg S.L."/>
            <person name="Hanson M."/>
            <person name="van Vugt R."/>
            <person name="Palmer N."/>
            <person name="Adams M.D."/>
            <person name="Gocayne J.D."/>
            <person name="Weidman J.F."/>
            <person name="Utterback T.R."/>
            <person name="Watthey L."/>
            <person name="McDonald L.A."/>
            <person name="Artiach P."/>
            <person name="Bowman C."/>
            <person name="Garland S.A."/>
            <person name="Fujii C."/>
            <person name="Cotton M.D."/>
            <person name="Horst K."/>
            <person name="Roberts K.M."/>
            <person name="Hatch B."/>
            <person name="Smith H.O."/>
            <person name="Venter J.C."/>
        </authorList>
    </citation>
    <scope>NUCLEOTIDE SEQUENCE [LARGE SCALE GENOMIC DNA]</scope>
    <source>
        <strain>ATCC 35210 / DSM 4680 / CIP 102532 / B31</strain>
    </source>
</reference>
<name>SPOT_BORBU</name>
<dbReference type="EC" id="3.1.7.2"/>
<dbReference type="EMBL" id="AE000783">
    <property type="protein sequence ID" value="AAC66590.1"/>
    <property type="molecule type" value="Genomic_DNA"/>
</dbReference>
<dbReference type="PIR" id="F70124">
    <property type="entry name" value="F70124"/>
</dbReference>
<dbReference type="RefSeq" id="NP_212332.1">
    <property type="nucleotide sequence ID" value="NC_001318.1"/>
</dbReference>
<dbReference type="RefSeq" id="WP_002657610.1">
    <property type="nucleotide sequence ID" value="NC_001318.1"/>
</dbReference>
<dbReference type="SMR" id="O51216"/>
<dbReference type="STRING" id="224326.BB_0198"/>
<dbReference type="PaxDb" id="224326-BB_0198"/>
<dbReference type="EnsemblBacteria" id="AAC66590">
    <property type="protein sequence ID" value="AAC66590"/>
    <property type="gene ID" value="BB_0198"/>
</dbReference>
<dbReference type="GeneID" id="56567624"/>
<dbReference type="KEGG" id="bbu:BB_0198"/>
<dbReference type="PATRIC" id="fig|224326.49.peg.594"/>
<dbReference type="HOGENOM" id="CLU_012300_3_0_12"/>
<dbReference type="OrthoDB" id="9805041at2"/>
<dbReference type="UniPathway" id="UPA00908">
    <property type="reaction ID" value="UER00886"/>
</dbReference>
<dbReference type="PHI-base" id="PHI:5102"/>
<dbReference type="Proteomes" id="UP000001807">
    <property type="component" value="Chromosome"/>
</dbReference>
<dbReference type="GO" id="GO:0005886">
    <property type="term" value="C:plasma membrane"/>
    <property type="evidence" value="ECO:0007669"/>
    <property type="project" value="TreeGrafter"/>
</dbReference>
<dbReference type="GO" id="GO:0008893">
    <property type="term" value="F:guanosine-3',5'-bis(diphosphate) 3'-diphosphatase activity"/>
    <property type="evidence" value="ECO:0007669"/>
    <property type="project" value="UniProtKB-EC"/>
</dbReference>
<dbReference type="GO" id="GO:0015970">
    <property type="term" value="P:guanosine tetraphosphate biosynthetic process"/>
    <property type="evidence" value="ECO:0007669"/>
    <property type="project" value="UniProtKB-UniPathway"/>
</dbReference>
<dbReference type="CDD" id="cd00077">
    <property type="entry name" value="HDc"/>
    <property type="match status" value="1"/>
</dbReference>
<dbReference type="CDD" id="cd05399">
    <property type="entry name" value="NT_Rel-Spo_like"/>
    <property type="match status" value="1"/>
</dbReference>
<dbReference type="CDD" id="cd01668">
    <property type="entry name" value="TGS_RSH"/>
    <property type="match status" value="1"/>
</dbReference>
<dbReference type="FunFam" id="3.10.20.30:FF:000002">
    <property type="entry name" value="GTP pyrophosphokinase (RelA/SpoT)"/>
    <property type="match status" value="1"/>
</dbReference>
<dbReference type="FunFam" id="1.10.3210.10:FF:000001">
    <property type="entry name" value="GTP pyrophosphokinase RelA"/>
    <property type="match status" value="1"/>
</dbReference>
<dbReference type="FunFam" id="3.30.460.10:FF:000001">
    <property type="entry name" value="GTP pyrophosphokinase RelA"/>
    <property type="match status" value="1"/>
</dbReference>
<dbReference type="Gene3D" id="3.10.20.30">
    <property type="match status" value="1"/>
</dbReference>
<dbReference type="Gene3D" id="3.30.460.10">
    <property type="entry name" value="Beta Polymerase, domain 2"/>
    <property type="match status" value="1"/>
</dbReference>
<dbReference type="Gene3D" id="1.10.3210.10">
    <property type="entry name" value="Hypothetical protein af1432"/>
    <property type="match status" value="1"/>
</dbReference>
<dbReference type="InterPro" id="IPR012675">
    <property type="entry name" value="Beta-grasp_dom_sf"/>
</dbReference>
<dbReference type="InterPro" id="IPR003607">
    <property type="entry name" value="HD/PDEase_dom"/>
</dbReference>
<dbReference type="InterPro" id="IPR006674">
    <property type="entry name" value="HD_domain"/>
</dbReference>
<dbReference type="InterPro" id="IPR043519">
    <property type="entry name" value="NT_sf"/>
</dbReference>
<dbReference type="InterPro" id="IPR004811">
    <property type="entry name" value="RelA/Spo_fam"/>
</dbReference>
<dbReference type="InterPro" id="IPR007685">
    <property type="entry name" value="RelA_SpoT"/>
</dbReference>
<dbReference type="InterPro" id="IPR004095">
    <property type="entry name" value="TGS"/>
</dbReference>
<dbReference type="InterPro" id="IPR012676">
    <property type="entry name" value="TGS-like"/>
</dbReference>
<dbReference type="InterPro" id="IPR033655">
    <property type="entry name" value="TGS_RelA/SpoT"/>
</dbReference>
<dbReference type="NCBIfam" id="TIGR00691">
    <property type="entry name" value="spoT_relA"/>
    <property type="match status" value="1"/>
</dbReference>
<dbReference type="PANTHER" id="PTHR21262:SF31">
    <property type="entry name" value="GTP PYROPHOSPHOKINASE"/>
    <property type="match status" value="1"/>
</dbReference>
<dbReference type="PANTHER" id="PTHR21262">
    <property type="entry name" value="GUANOSINE-3',5'-BIS DIPHOSPHATE 3'-PYROPHOSPHOHYDROLASE"/>
    <property type="match status" value="1"/>
</dbReference>
<dbReference type="Pfam" id="PF13328">
    <property type="entry name" value="HD_4"/>
    <property type="match status" value="1"/>
</dbReference>
<dbReference type="Pfam" id="PF04607">
    <property type="entry name" value="RelA_SpoT"/>
    <property type="match status" value="1"/>
</dbReference>
<dbReference type="Pfam" id="PF02824">
    <property type="entry name" value="TGS"/>
    <property type="match status" value="1"/>
</dbReference>
<dbReference type="SMART" id="SM00471">
    <property type="entry name" value="HDc"/>
    <property type="match status" value="1"/>
</dbReference>
<dbReference type="SMART" id="SM00954">
    <property type="entry name" value="RelA_SpoT"/>
    <property type="match status" value="1"/>
</dbReference>
<dbReference type="SUPFAM" id="SSF109604">
    <property type="entry name" value="HD-domain/PDEase-like"/>
    <property type="match status" value="1"/>
</dbReference>
<dbReference type="SUPFAM" id="SSF81301">
    <property type="entry name" value="Nucleotidyltransferase"/>
    <property type="match status" value="1"/>
</dbReference>
<dbReference type="SUPFAM" id="SSF81271">
    <property type="entry name" value="TGS-like"/>
    <property type="match status" value="1"/>
</dbReference>
<dbReference type="PROSITE" id="PS51831">
    <property type="entry name" value="HD"/>
    <property type="match status" value="1"/>
</dbReference>
<dbReference type="PROSITE" id="PS51880">
    <property type="entry name" value="TGS"/>
    <property type="match status" value="1"/>
</dbReference>
<evidence type="ECO:0000250" key="1"/>
<evidence type="ECO:0000255" key="2">
    <source>
        <dbReference type="PROSITE-ProRule" id="PRU01175"/>
    </source>
</evidence>
<evidence type="ECO:0000255" key="3">
    <source>
        <dbReference type="PROSITE-ProRule" id="PRU01228"/>
    </source>
</evidence>
<evidence type="ECO:0000305" key="4"/>
<sequence>MIQAYEIAHLIKINDLEKARNIFKKTVENTYKDEFERKSIFKALEIAEQLHYGQYRESGEPYIIHPIMVSLFLAKFQLDFKATIAGLLHDVLEDTNVEKEEIVKEFDEEILSLIDGVTKIHDLHNKTRSIKEANTISKMFFAMTHDIRIIIIKLADKLHNMTTLSYLPKNRQDRIAKDCLSTYVPIAERLGISSLKTYLEDLSFKHLYPKDYKEIKNFLSETKIEREKKLYKGKLSIEKELQKSGIEAEITVRSKHFYSIFRKMQTRTNKLTQIFDTLGIRIICKKQKECYEILEIVHRVWKPIPGRLKDYIASPKENKYQSLHTTVRIPEDNQLIEIQIRTEEMDRIANYGVAAHWIYKEQIELKADDLSFINRIKKWQQESANKSQYSMNDIHKELLNTFIYVYTPEGEVVELPFGSNSIDFAYIIHTDIGDQALYAKINGKISSITKPLKNEQIVEIFTSKDSKPDVIWLNSVRTKKARSKIRSWLNKNDNTIFVDNNIIAYLVGANKEQRKLFSLFKSYTKTKIKRIAIDPECSPTTGEDIIGIIHKDEIIVHNENCQKLKSYKKPQLIEVEWEATPTRKVHHIILLLKELKGIFSYLENIFTLNDVRLISEKIEDCGNGHGITNIIVSSNAKNITKIISALKENPNILQIMQIEEDIKNYDN</sequence>
<organism>
    <name type="scientific">Borreliella burgdorferi (strain ATCC 35210 / DSM 4680 / CIP 102532 / B31)</name>
    <name type="common">Borrelia burgdorferi</name>
    <dbReference type="NCBI Taxonomy" id="224326"/>
    <lineage>
        <taxon>Bacteria</taxon>
        <taxon>Pseudomonadati</taxon>
        <taxon>Spirochaetota</taxon>
        <taxon>Spirochaetia</taxon>
        <taxon>Spirochaetales</taxon>
        <taxon>Borreliaceae</taxon>
        <taxon>Borreliella</taxon>
    </lineage>
</organism>
<feature type="chain" id="PRO_0000166568" description="Guanosine-3',5'-bis(diphosphate) 3'-pyrophosphohydrolase">
    <location>
        <begin position="1"/>
        <end position="667"/>
    </location>
</feature>
<feature type="domain" description="HD" evidence="2">
    <location>
        <begin position="62"/>
        <end position="161"/>
    </location>
</feature>
<feature type="domain" description="TGS" evidence="3">
    <location>
        <begin position="401"/>
        <end position="462"/>
    </location>
</feature>
<keyword id="KW-0378">Hydrolase</keyword>
<keyword id="KW-0464">Manganese</keyword>
<keyword id="KW-1185">Reference proteome</keyword>